<name>TPC1_EREGS</name>
<protein>
    <recommendedName>
        <fullName>Mitochondrial thiamine pyrophosphate carrier 1</fullName>
    </recommendedName>
</protein>
<dbReference type="EMBL" id="AE016814">
    <property type="protein sequence ID" value="AAS50401.1"/>
    <property type="molecule type" value="Genomic_DNA"/>
</dbReference>
<dbReference type="RefSeq" id="NP_982577.1">
    <property type="nucleotide sequence ID" value="NM_207930.1"/>
</dbReference>
<dbReference type="SMR" id="Q75EP3"/>
<dbReference type="FunCoup" id="Q75EP3">
    <property type="interactions" value="44"/>
</dbReference>
<dbReference type="STRING" id="284811.Q75EP3"/>
<dbReference type="EnsemblFungi" id="AAS50401">
    <property type="protein sequence ID" value="AAS50401"/>
    <property type="gene ID" value="AGOS_AAR036W"/>
</dbReference>
<dbReference type="GeneID" id="4618442"/>
<dbReference type="KEGG" id="ago:AGOS_AAR036W"/>
<dbReference type="eggNOG" id="KOG0752">
    <property type="taxonomic scope" value="Eukaryota"/>
</dbReference>
<dbReference type="HOGENOM" id="CLU_015166_10_3_1"/>
<dbReference type="InParanoid" id="Q75EP3"/>
<dbReference type="OMA" id="MYVCYGA"/>
<dbReference type="OrthoDB" id="18574at2759"/>
<dbReference type="Proteomes" id="UP000000591">
    <property type="component" value="Chromosome I"/>
</dbReference>
<dbReference type="GO" id="GO:0005743">
    <property type="term" value="C:mitochondrial inner membrane"/>
    <property type="evidence" value="ECO:0000318"/>
    <property type="project" value="GO_Central"/>
</dbReference>
<dbReference type="GO" id="GO:0090422">
    <property type="term" value="F:thiamine pyrophosphate transmembrane transporter activity"/>
    <property type="evidence" value="ECO:0007669"/>
    <property type="project" value="EnsemblFungi"/>
</dbReference>
<dbReference type="GO" id="GO:0015234">
    <property type="term" value="F:thiamine transmembrane transporter activity"/>
    <property type="evidence" value="ECO:0000318"/>
    <property type="project" value="GO_Central"/>
</dbReference>
<dbReference type="GO" id="GO:1990545">
    <property type="term" value="P:mitochondrial thiamine pyrophosphate transmembrane transport"/>
    <property type="evidence" value="ECO:0007669"/>
    <property type="project" value="EnsemblFungi"/>
</dbReference>
<dbReference type="GO" id="GO:0030974">
    <property type="term" value="P:thiamine pyrophosphate transmembrane transport"/>
    <property type="evidence" value="ECO:0000318"/>
    <property type="project" value="GO_Central"/>
</dbReference>
<dbReference type="FunFam" id="1.50.40.10:FF:000327">
    <property type="entry name" value="Mitochondrial thiamine pyrophosphate carrier 1"/>
    <property type="match status" value="1"/>
</dbReference>
<dbReference type="Gene3D" id="1.50.40.10">
    <property type="entry name" value="Mitochondrial carrier domain"/>
    <property type="match status" value="1"/>
</dbReference>
<dbReference type="InterPro" id="IPR002067">
    <property type="entry name" value="Mit_carrier"/>
</dbReference>
<dbReference type="InterPro" id="IPR018108">
    <property type="entry name" value="Mitochondrial_sb/sol_carrier"/>
</dbReference>
<dbReference type="InterPro" id="IPR023395">
    <property type="entry name" value="Mt_carrier_dom_sf"/>
</dbReference>
<dbReference type="PANTHER" id="PTHR24089">
    <property type="entry name" value="SOLUTE CARRIER FAMILY 25"/>
    <property type="match status" value="1"/>
</dbReference>
<dbReference type="Pfam" id="PF00153">
    <property type="entry name" value="Mito_carr"/>
    <property type="match status" value="3"/>
</dbReference>
<dbReference type="PRINTS" id="PR00926">
    <property type="entry name" value="MITOCARRIER"/>
</dbReference>
<dbReference type="SUPFAM" id="SSF103506">
    <property type="entry name" value="Mitochondrial carrier"/>
    <property type="match status" value="1"/>
</dbReference>
<dbReference type="PROSITE" id="PS50920">
    <property type="entry name" value="SOLCAR"/>
    <property type="match status" value="3"/>
</dbReference>
<reference key="1">
    <citation type="journal article" date="2004" name="Science">
        <title>The Ashbya gossypii genome as a tool for mapping the ancient Saccharomyces cerevisiae genome.</title>
        <authorList>
            <person name="Dietrich F.S."/>
            <person name="Voegeli S."/>
            <person name="Brachat S."/>
            <person name="Lerch A."/>
            <person name="Gates K."/>
            <person name="Steiner S."/>
            <person name="Mohr C."/>
            <person name="Poehlmann R."/>
            <person name="Luedi P."/>
            <person name="Choi S."/>
            <person name="Wing R.A."/>
            <person name="Flavier A."/>
            <person name="Gaffney T.D."/>
            <person name="Philippsen P."/>
        </authorList>
    </citation>
    <scope>NUCLEOTIDE SEQUENCE [LARGE SCALE GENOMIC DNA]</scope>
    <source>
        <strain>ATCC 10895 / CBS 109.51 / FGSC 9923 / NRRL Y-1056</strain>
    </source>
</reference>
<reference key="2">
    <citation type="journal article" date="2013" name="G3 (Bethesda)">
        <title>Genomes of Ashbya fungi isolated from insects reveal four mating-type loci, numerous translocations, lack of transposons, and distinct gene duplications.</title>
        <authorList>
            <person name="Dietrich F.S."/>
            <person name="Voegeli S."/>
            <person name="Kuo S."/>
            <person name="Philippsen P."/>
        </authorList>
    </citation>
    <scope>GENOME REANNOTATION</scope>
    <source>
        <strain>ATCC 10895 / CBS 109.51 / FGSC 9923 / NRRL Y-1056</strain>
    </source>
</reference>
<comment type="function">
    <text evidence="1">Mitochondrial transporter that mediates uptake of thiamine pyrophosphate (ThPP) into mitochondria.</text>
</comment>
<comment type="subcellular location">
    <subcellularLocation>
        <location evidence="1">Mitochondrion inner membrane</location>
        <topology evidence="1">Multi-pass membrane protein</topology>
    </subcellularLocation>
</comment>
<comment type="similarity">
    <text evidence="3">Belongs to the mitochondrial carrier (TC 2.A.29) family.</text>
</comment>
<sequence>MAASSGSPQLATEDHLRKGEAVSGLHAVVAGSVSGLVARSVTAPMDTVKIRRQLQLASEHKYHGILHTFRTVAREEGVRALWKGNVPASAMYVLYGSLQFGTYAWLNTAAASAGLPPQAHSLAVGALAGLVSSLLTYPLDLLRTRLVANRSAHFFSLRRQARVIWDTEGPAGFFRGGAWAIAATTLTTGLIFGIYETCTIAADTYGLPWLAAAASPTAGLVSKAAVFPLDTVRRRLQIVDAKHIPFFTRDPGAYSALRGTRFLGLAVHMVRAEGIASLYKGLTMALCKSTPTTVITLWVYQRCLRLLEPTRAPQLPA</sequence>
<accession>Q75EP3</accession>
<feature type="chain" id="PRO_0000320454" description="Mitochondrial thiamine pyrophosphate carrier 1">
    <location>
        <begin position="1"/>
        <end position="317"/>
    </location>
</feature>
<feature type="transmembrane region" description="Helical; Name=1" evidence="2">
    <location>
        <begin position="21"/>
        <end position="41"/>
    </location>
</feature>
<feature type="transmembrane region" description="Helical; Name=2" evidence="2">
    <location>
        <begin position="86"/>
        <end position="106"/>
    </location>
</feature>
<feature type="transmembrane region" description="Helical; Name=3" evidence="2">
    <location>
        <begin position="122"/>
        <end position="142"/>
    </location>
</feature>
<feature type="transmembrane region" description="Helical; Name=4" evidence="2">
    <location>
        <begin position="176"/>
        <end position="196"/>
    </location>
</feature>
<feature type="transmembrane region" description="Helical; Name=5" evidence="2">
    <location>
        <begin position="207"/>
        <end position="227"/>
    </location>
</feature>
<feature type="transmembrane region" description="Helical; Name=6" evidence="2">
    <location>
        <begin position="281"/>
        <end position="300"/>
    </location>
</feature>
<feature type="repeat" description="Solcar 1">
    <location>
        <begin position="22"/>
        <end position="109"/>
    </location>
</feature>
<feature type="repeat" description="Solcar 2">
    <location>
        <begin position="116"/>
        <end position="201"/>
    </location>
</feature>
<feature type="repeat" description="Solcar 3">
    <location>
        <begin position="206"/>
        <end position="306"/>
    </location>
</feature>
<keyword id="KW-0472">Membrane</keyword>
<keyword id="KW-0496">Mitochondrion</keyword>
<keyword id="KW-0999">Mitochondrion inner membrane</keyword>
<keyword id="KW-1185">Reference proteome</keyword>
<keyword id="KW-0677">Repeat</keyword>
<keyword id="KW-0812">Transmembrane</keyword>
<keyword id="KW-1133">Transmembrane helix</keyword>
<keyword id="KW-0813">Transport</keyword>
<organism>
    <name type="scientific">Eremothecium gossypii (strain ATCC 10895 / CBS 109.51 / FGSC 9923 / NRRL Y-1056)</name>
    <name type="common">Yeast</name>
    <name type="synonym">Ashbya gossypii</name>
    <dbReference type="NCBI Taxonomy" id="284811"/>
    <lineage>
        <taxon>Eukaryota</taxon>
        <taxon>Fungi</taxon>
        <taxon>Dikarya</taxon>
        <taxon>Ascomycota</taxon>
        <taxon>Saccharomycotina</taxon>
        <taxon>Saccharomycetes</taxon>
        <taxon>Saccharomycetales</taxon>
        <taxon>Saccharomycetaceae</taxon>
        <taxon>Eremothecium</taxon>
    </lineage>
</organism>
<proteinExistence type="inferred from homology"/>
<evidence type="ECO:0000250" key="1"/>
<evidence type="ECO:0000255" key="2"/>
<evidence type="ECO:0000305" key="3"/>
<gene>
    <name type="primary">TPC1</name>
    <name type="ordered locus">AAR036W</name>
</gene>